<organism>
    <name type="scientific">Streptococcus pyogenes serotype M2 (strain MGAS10270)</name>
    <dbReference type="NCBI Taxonomy" id="370552"/>
    <lineage>
        <taxon>Bacteria</taxon>
        <taxon>Bacillati</taxon>
        <taxon>Bacillota</taxon>
        <taxon>Bacilli</taxon>
        <taxon>Lactobacillales</taxon>
        <taxon>Streptococcaceae</taxon>
        <taxon>Streptococcus</taxon>
    </lineage>
</organism>
<protein>
    <recommendedName>
        <fullName>UPF0758 protein MGAS10270_Spy0956</fullName>
    </recommendedName>
</protein>
<dbReference type="EMBL" id="CP000260">
    <property type="protein sequence ID" value="ABF34021.1"/>
    <property type="molecule type" value="Genomic_DNA"/>
</dbReference>
<dbReference type="SMR" id="Q1JGX3"/>
<dbReference type="KEGG" id="sph:MGAS10270_Spy0956"/>
<dbReference type="HOGENOM" id="CLU_073529_0_2_9"/>
<dbReference type="Proteomes" id="UP000002436">
    <property type="component" value="Chromosome"/>
</dbReference>
<dbReference type="GO" id="GO:0046872">
    <property type="term" value="F:metal ion binding"/>
    <property type="evidence" value="ECO:0007669"/>
    <property type="project" value="UniProtKB-KW"/>
</dbReference>
<dbReference type="GO" id="GO:0008237">
    <property type="term" value="F:metallopeptidase activity"/>
    <property type="evidence" value="ECO:0007669"/>
    <property type="project" value="UniProtKB-KW"/>
</dbReference>
<dbReference type="GO" id="GO:0006508">
    <property type="term" value="P:proteolysis"/>
    <property type="evidence" value="ECO:0007669"/>
    <property type="project" value="UniProtKB-KW"/>
</dbReference>
<dbReference type="CDD" id="cd08071">
    <property type="entry name" value="MPN_DUF2466"/>
    <property type="match status" value="1"/>
</dbReference>
<dbReference type="Gene3D" id="3.40.140.10">
    <property type="entry name" value="Cytidine Deaminase, domain 2"/>
    <property type="match status" value="1"/>
</dbReference>
<dbReference type="InterPro" id="IPR037518">
    <property type="entry name" value="MPN"/>
</dbReference>
<dbReference type="InterPro" id="IPR025657">
    <property type="entry name" value="RadC_JAB"/>
</dbReference>
<dbReference type="InterPro" id="IPR010994">
    <property type="entry name" value="RuvA_2-like"/>
</dbReference>
<dbReference type="InterPro" id="IPR001405">
    <property type="entry name" value="UPF0758"/>
</dbReference>
<dbReference type="InterPro" id="IPR020891">
    <property type="entry name" value="UPF0758_CS"/>
</dbReference>
<dbReference type="InterPro" id="IPR046778">
    <property type="entry name" value="UPF0758_N"/>
</dbReference>
<dbReference type="NCBIfam" id="NF000642">
    <property type="entry name" value="PRK00024.1"/>
    <property type="match status" value="1"/>
</dbReference>
<dbReference type="NCBIfam" id="TIGR00608">
    <property type="entry name" value="radc"/>
    <property type="match status" value="1"/>
</dbReference>
<dbReference type="PANTHER" id="PTHR30471">
    <property type="entry name" value="DNA REPAIR PROTEIN RADC"/>
    <property type="match status" value="1"/>
</dbReference>
<dbReference type="PANTHER" id="PTHR30471:SF3">
    <property type="entry name" value="UPF0758 PROTEIN YEES-RELATED"/>
    <property type="match status" value="1"/>
</dbReference>
<dbReference type="Pfam" id="PF04002">
    <property type="entry name" value="RadC"/>
    <property type="match status" value="1"/>
</dbReference>
<dbReference type="Pfam" id="PF20582">
    <property type="entry name" value="UPF0758_N"/>
    <property type="match status" value="1"/>
</dbReference>
<dbReference type="SUPFAM" id="SSF47781">
    <property type="entry name" value="RuvA domain 2-like"/>
    <property type="match status" value="1"/>
</dbReference>
<dbReference type="PROSITE" id="PS50249">
    <property type="entry name" value="MPN"/>
    <property type="match status" value="1"/>
</dbReference>
<dbReference type="PROSITE" id="PS01302">
    <property type="entry name" value="UPF0758"/>
    <property type="match status" value="1"/>
</dbReference>
<gene>
    <name type="ordered locus">MGAS10270_Spy0956</name>
</gene>
<accession>Q1JGX3</accession>
<keyword id="KW-0378">Hydrolase</keyword>
<keyword id="KW-0479">Metal-binding</keyword>
<keyword id="KW-0482">Metalloprotease</keyword>
<keyword id="KW-0645">Protease</keyword>
<keyword id="KW-0862">Zinc</keyword>
<name>Y956_STRPD</name>
<reference key="1">
    <citation type="journal article" date="2006" name="Proc. Natl. Acad. Sci. U.S.A.">
        <title>Molecular genetic anatomy of inter- and intraserotype variation in the human bacterial pathogen group A Streptococcus.</title>
        <authorList>
            <person name="Beres S.B."/>
            <person name="Richter E.W."/>
            <person name="Nagiec M.J."/>
            <person name="Sumby P."/>
            <person name="Porcella S.F."/>
            <person name="DeLeo F.R."/>
            <person name="Musser J.M."/>
        </authorList>
    </citation>
    <scope>NUCLEOTIDE SEQUENCE [LARGE SCALE GENOMIC DNA]</scope>
    <source>
        <strain>MGAS10270</strain>
    </source>
</reference>
<evidence type="ECO:0000255" key="1">
    <source>
        <dbReference type="PROSITE-ProRule" id="PRU01182"/>
    </source>
</evidence>
<evidence type="ECO:0000305" key="2"/>
<comment type="similarity">
    <text evidence="2">Belongs to the UPF0758 family.</text>
</comment>
<proteinExistence type="inferred from homology"/>
<feature type="chain" id="PRO_1000089860" description="UPF0758 protein MGAS10270_Spy0956">
    <location>
        <begin position="1"/>
        <end position="226"/>
    </location>
</feature>
<feature type="domain" description="MPN" evidence="1">
    <location>
        <begin position="103"/>
        <end position="225"/>
    </location>
</feature>
<feature type="short sequence motif" description="JAMM motif" evidence="1">
    <location>
        <begin position="174"/>
        <end position="187"/>
    </location>
</feature>
<feature type="binding site" evidence="1">
    <location>
        <position position="174"/>
    </location>
    <ligand>
        <name>Zn(2+)</name>
        <dbReference type="ChEBI" id="CHEBI:29105"/>
        <note>catalytic</note>
    </ligand>
</feature>
<feature type="binding site" evidence="1">
    <location>
        <position position="176"/>
    </location>
    <ligand>
        <name>Zn(2+)</name>
        <dbReference type="ChEBI" id="CHEBI:29105"/>
        <note>catalytic</note>
    </ligand>
</feature>
<feature type="binding site" evidence="1">
    <location>
        <position position="187"/>
    </location>
    <ligand>
        <name>Zn(2+)</name>
        <dbReference type="ChEBI" id="CHEBI:29105"/>
        <note>catalytic</note>
    </ligand>
</feature>
<sequence>MYSIKCDDNKAMPRERLMRLGAESLSNQELLAILLRTGNKEKHVLELSSYLLSHLDSLADFKKMSLQELQHLAGIGKVKAIEIKAMIELVSRILATDKTLTDSVLTSVQVAEKMMAALGDKKQEHLVVLYLDNQNRIIEEKTIFIGTVRRSLAEPREILYYACKNMATSLIVIHNHPSGNIEPSSNDYCFTEKIKRSCEDLGIICLDHIIVSYKDYYSFREKSTLF</sequence>